<sequence length="860" mass="97814">MQEQYRPDLLEQEVQKYWQNNQTFKAVKDSSKEKYYCLSMFPYPSGRLHMGHVRNYTIADVVSRYQRMNGKNVLQPVGWDAFGLPAEGAAVKNKTAPAKWTYENIDYMKNQLKMLGFSYDWDREIATCKPEYYKWEQWFFTELYKKGLVYKKTSVVNWCPNDETVLANEQVHEGCCWRCDTPVEQKEIPQWFIKITDYAEQLLSGLDTLPEWPDMVKTMQRNWIGRSEGVEITFKIENSDETVAVYTTRPDTFYGVSYMAVAAGHPLAEKAAQNNAELARFIQECKNTKVAEAELATMEKKGMATGINAIHPITGKPVPVWVANFVLMHYGTGAVMAVPAHDQRDFEFATKYGLPIKQVIAPMNGEEIDLTKAAFTEHGKLVNSAEFDGLDFEAAFNGIADKLEKMGVGKRQVNYRLRDWGVSRQRYWGAPIPMLTLENGDVVPAPLQDLPIVLPEDVVMDGVKSPIKADPDWAKTSYNGQPALKETDTFDTFMESSWYYARYTSPQYHEGMLDSDEANYWLPVDQYIGGIEHATMHLLYFRFFHKLLRDAGLVSTDEPTKKLLCQGMVLADAFYYTSPTNERIWVSPTKVMLERDEKGRILKATDDEGHELVHAGMTKMSKSKNNGIDPQEMVEKYGADTVRLFMMFASPAEMTLEWQESGVEGAKRFLGRLWNLVFEYNKNPVKTAPNPTALSSAQKALRRDVHKTIAKVSDDIGRRQTFNTAIAAIMELMNKLTRAPLTDEQDRAVMGEALSAVVRMLYPITPHICFQLWKDLGNEDIIDFAPWVQADEAAMIDDEKLVVVQVNGKVRGKITVPADMAEEEIKRVALAEENVQKFLDGLNIVKVIYVPGKLLSFVAK</sequence>
<accession>Q65VR5</accession>
<dbReference type="EC" id="6.1.1.4" evidence="1"/>
<dbReference type="EMBL" id="AE016827">
    <property type="protein sequence ID" value="AAU36945.1"/>
    <property type="molecule type" value="Genomic_DNA"/>
</dbReference>
<dbReference type="RefSeq" id="WP_011199520.1">
    <property type="nucleotide sequence ID" value="NC_006300.1"/>
</dbReference>
<dbReference type="SMR" id="Q65VR5"/>
<dbReference type="STRING" id="221988.MS0338"/>
<dbReference type="KEGG" id="msu:MS0338"/>
<dbReference type="eggNOG" id="COG0495">
    <property type="taxonomic scope" value="Bacteria"/>
</dbReference>
<dbReference type="HOGENOM" id="CLU_004427_0_0_6"/>
<dbReference type="OrthoDB" id="9810365at2"/>
<dbReference type="Proteomes" id="UP000000607">
    <property type="component" value="Chromosome"/>
</dbReference>
<dbReference type="GO" id="GO:0005829">
    <property type="term" value="C:cytosol"/>
    <property type="evidence" value="ECO:0007669"/>
    <property type="project" value="TreeGrafter"/>
</dbReference>
<dbReference type="GO" id="GO:0002161">
    <property type="term" value="F:aminoacyl-tRNA deacylase activity"/>
    <property type="evidence" value="ECO:0007669"/>
    <property type="project" value="InterPro"/>
</dbReference>
<dbReference type="GO" id="GO:0005524">
    <property type="term" value="F:ATP binding"/>
    <property type="evidence" value="ECO:0007669"/>
    <property type="project" value="UniProtKB-UniRule"/>
</dbReference>
<dbReference type="GO" id="GO:0004823">
    <property type="term" value="F:leucine-tRNA ligase activity"/>
    <property type="evidence" value="ECO:0007669"/>
    <property type="project" value="UniProtKB-UniRule"/>
</dbReference>
<dbReference type="GO" id="GO:0006429">
    <property type="term" value="P:leucyl-tRNA aminoacylation"/>
    <property type="evidence" value="ECO:0007669"/>
    <property type="project" value="UniProtKB-UniRule"/>
</dbReference>
<dbReference type="CDD" id="cd07958">
    <property type="entry name" value="Anticodon_Ia_Leu_BEm"/>
    <property type="match status" value="1"/>
</dbReference>
<dbReference type="CDD" id="cd00812">
    <property type="entry name" value="LeuRS_core"/>
    <property type="match status" value="1"/>
</dbReference>
<dbReference type="FunFam" id="1.10.730.10:FF:000002">
    <property type="entry name" value="Leucine--tRNA ligase"/>
    <property type="match status" value="1"/>
</dbReference>
<dbReference type="FunFam" id="2.20.28.290:FF:000001">
    <property type="entry name" value="Leucine--tRNA ligase"/>
    <property type="match status" value="1"/>
</dbReference>
<dbReference type="FunFam" id="3.10.20.590:FF:000001">
    <property type="entry name" value="Leucine--tRNA ligase"/>
    <property type="match status" value="1"/>
</dbReference>
<dbReference type="FunFam" id="3.40.50.620:FF:000003">
    <property type="entry name" value="Leucine--tRNA ligase"/>
    <property type="match status" value="1"/>
</dbReference>
<dbReference type="FunFam" id="3.40.50.620:FF:000051">
    <property type="entry name" value="Leucine--tRNA ligase"/>
    <property type="match status" value="1"/>
</dbReference>
<dbReference type="FunFam" id="3.90.740.10:FF:000012">
    <property type="entry name" value="Leucine--tRNA ligase"/>
    <property type="match status" value="1"/>
</dbReference>
<dbReference type="Gene3D" id="2.20.28.290">
    <property type="match status" value="1"/>
</dbReference>
<dbReference type="Gene3D" id="3.10.20.590">
    <property type="match status" value="1"/>
</dbReference>
<dbReference type="Gene3D" id="3.40.50.620">
    <property type="entry name" value="HUPs"/>
    <property type="match status" value="2"/>
</dbReference>
<dbReference type="Gene3D" id="1.10.730.10">
    <property type="entry name" value="Isoleucyl-tRNA Synthetase, Domain 1"/>
    <property type="match status" value="1"/>
</dbReference>
<dbReference type="Gene3D" id="3.90.740.10">
    <property type="entry name" value="Valyl/Leucyl/Isoleucyl-tRNA synthetase, editing domain"/>
    <property type="match status" value="1"/>
</dbReference>
<dbReference type="HAMAP" id="MF_00049_B">
    <property type="entry name" value="Leu_tRNA_synth_B"/>
    <property type="match status" value="1"/>
</dbReference>
<dbReference type="InterPro" id="IPR001412">
    <property type="entry name" value="aa-tRNA-synth_I_CS"/>
</dbReference>
<dbReference type="InterPro" id="IPR002300">
    <property type="entry name" value="aa-tRNA-synth_Ia"/>
</dbReference>
<dbReference type="InterPro" id="IPR002302">
    <property type="entry name" value="Leu-tRNA-ligase"/>
</dbReference>
<dbReference type="InterPro" id="IPR025709">
    <property type="entry name" value="Leu_tRNA-synth_edit"/>
</dbReference>
<dbReference type="InterPro" id="IPR013155">
    <property type="entry name" value="M/V/L/I-tRNA-synth_anticd-bd"/>
</dbReference>
<dbReference type="InterPro" id="IPR015413">
    <property type="entry name" value="Methionyl/Leucyl_tRNA_Synth"/>
</dbReference>
<dbReference type="InterPro" id="IPR014729">
    <property type="entry name" value="Rossmann-like_a/b/a_fold"/>
</dbReference>
<dbReference type="InterPro" id="IPR009080">
    <property type="entry name" value="tRNAsynth_Ia_anticodon-bd"/>
</dbReference>
<dbReference type="InterPro" id="IPR009008">
    <property type="entry name" value="Val/Leu/Ile-tRNA-synth_edit"/>
</dbReference>
<dbReference type="NCBIfam" id="TIGR00396">
    <property type="entry name" value="leuS_bact"/>
    <property type="match status" value="1"/>
</dbReference>
<dbReference type="PANTHER" id="PTHR43740:SF2">
    <property type="entry name" value="LEUCINE--TRNA LIGASE, MITOCHONDRIAL"/>
    <property type="match status" value="1"/>
</dbReference>
<dbReference type="PANTHER" id="PTHR43740">
    <property type="entry name" value="LEUCYL-TRNA SYNTHETASE"/>
    <property type="match status" value="1"/>
</dbReference>
<dbReference type="Pfam" id="PF08264">
    <property type="entry name" value="Anticodon_1"/>
    <property type="match status" value="1"/>
</dbReference>
<dbReference type="Pfam" id="PF00133">
    <property type="entry name" value="tRNA-synt_1"/>
    <property type="match status" value="2"/>
</dbReference>
<dbReference type="Pfam" id="PF13603">
    <property type="entry name" value="tRNA-synt_1_2"/>
    <property type="match status" value="1"/>
</dbReference>
<dbReference type="Pfam" id="PF09334">
    <property type="entry name" value="tRNA-synt_1g"/>
    <property type="match status" value="1"/>
</dbReference>
<dbReference type="PRINTS" id="PR00985">
    <property type="entry name" value="TRNASYNTHLEU"/>
</dbReference>
<dbReference type="SUPFAM" id="SSF47323">
    <property type="entry name" value="Anticodon-binding domain of a subclass of class I aminoacyl-tRNA synthetases"/>
    <property type="match status" value="1"/>
</dbReference>
<dbReference type="SUPFAM" id="SSF52374">
    <property type="entry name" value="Nucleotidylyl transferase"/>
    <property type="match status" value="1"/>
</dbReference>
<dbReference type="SUPFAM" id="SSF50677">
    <property type="entry name" value="ValRS/IleRS/LeuRS editing domain"/>
    <property type="match status" value="1"/>
</dbReference>
<dbReference type="PROSITE" id="PS00178">
    <property type="entry name" value="AA_TRNA_LIGASE_I"/>
    <property type="match status" value="1"/>
</dbReference>
<reference key="1">
    <citation type="journal article" date="2004" name="Nat. Biotechnol.">
        <title>The genome sequence of the capnophilic rumen bacterium Mannheimia succiniciproducens.</title>
        <authorList>
            <person name="Hong S.H."/>
            <person name="Kim J.S."/>
            <person name="Lee S.Y."/>
            <person name="In Y.H."/>
            <person name="Choi S.S."/>
            <person name="Rih J.-K."/>
            <person name="Kim C.H."/>
            <person name="Jeong H."/>
            <person name="Hur C.G."/>
            <person name="Kim J.J."/>
        </authorList>
    </citation>
    <scope>NUCLEOTIDE SEQUENCE [LARGE SCALE GENOMIC DNA]</scope>
    <source>
        <strain>KCTC 0769BP / MBEL55E</strain>
    </source>
</reference>
<name>SYL_MANSM</name>
<proteinExistence type="inferred from homology"/>
<keyword id="KW-0030">Aminoacyl-tRNA synthetase</keyword>
<keyword id="KW-0067">ATP-binding</keyword>
<keyword id="KW-0963">Cytoplasm</keyword>
<keyword id="KW-0436">Ligase</keyword>
<keyword id="KW-0547">Nucleotide-binding</keyword>
<keyword id="KW-0648">Protein biosynthesis</keyword>
<feature type="chain" id="PRO_0000152040" description="Leucine--tRNA ligase">
    <location>
        <begin position="1"/>
        <end position="860"/>
    </location>
</feature>
<feature type="short sequence motif" description="'HIGH' region">
    <location>
        <begin position="42"/>
        <end position="52"/>
    </location>
</feature>
<feature type="short sequence motif" description="'KMSKS' region">
    <location>
        <begin position="619"/>
        <end position="623"/>
    </location>
</feature>
<feature type="binding site" evidence="1">
    <location>
        <position position="622"/>
    </location>
    <ligand>
        <name>ATP</name>
        <dbReference type="ChEBI" id="CHEBI:30616"/>
    </ligand>
</feature>
<organism>
    <name type="scientific">Mannheimia succiniciproducens (strain KCTC 0769BP / MBEL55E)</name>
    <dbReference type="NCBI Taxonomy" id="221988"/>
    <lineage>
        <taxon>Bacteria</taxon>
        <taxon>Pseudomonadati</taxon>
        <taxon>Pseudomonadota</taxon>
        <taxon>Gammaproteobacteria</taxon>
        <taxon>Pasteurellales</taxon>
        <taxon>Pasteurellaceae</taxon>
        <taxon>Basfia</taxon>
    </lineage>
</organism>
<gene>
    <name evidence="1" type="primary">leuS</name>
    <name type="ordered locus">MS0338</name>
</gene>
<evidence type="ECO:0000255" key="1">
    <source>
        <dbReference type="HAMAP-Rule" id="MF_00049"/>
    </source>
</evidence>
<protein>
    <recommendedName>
        <fullName evidence="1">Leucine--tRNA ligase</fullName>
        <ecNumber evidence="1">6.1.1.4</ecNumber>
    </recommendedName>
    <alternativeName>
        <fullName evidence="1">Leucyl-tRNA synthetase</fullName>
        <shortName evidence="1">LeuRS</shortName>
    </alternativeName>
</protein>
<comment type="catalytic activity">
    <reaction evidence="1">
        <text>tRNA(Leu) + L-leucine + ATP = L-leucyl-tRNA(Leu) + AMP + diphosphate</text>
        <dbReference type="Rhea" id="RHEA:11688"/>
        <dbReference type="Rhea" id="RHEA-COMP:9613"/>
        <dbReference type="Rhea" id="RHEA-COMP:9622"/>
        <dbReference type="ChEBI" id="CHEBI:30616"/>
        <dbReference type="ChEBI" id="CHEBI:33019"/>
        <dbReference type="ChEBI" id="CHEBI:57427"/>
        <dbReference type="ChEBI" id="CHEBI:78442"/>
        <dbReference type="ChEBI" id="CHEBI:78494"/>
        <dbReference type="ChEBI" id="CHEBI:456215"/>
        <dbReference type="EC" id="6.1.1.4"/>
    </reaction>
</comment>
<comment type="subcellular location">
    <subcellularLocation>
        <location evidence="1">Cytoplasm</location>
    </subcellularLocation>
</comment>
<comment type="similarity">
    <text evidence="1">Belongs to the class-I aminoacyl-tRNA synthetase family.</text>
</comment>